<reference key="1">
    <citation type="journal article" date="2006" name="Genes Genet. Syst.">
        <title>Complete nucleotide sequence of the cotton (Gossypium barbadense L.) chloroplast genome with a comparative analysis of sequences among 9 dicot plants.</title>
        <authorList>
            <person name="Ibrahim R.I.H."/>
            <person name="Azuma J."/>
            <person name="Sakamoto M."/>
        </authorList>
    </citation>
    <scope>NUCLEOTIDE SEQUENCE [LARGE SCALE GENOMIC DNA]</scope>
</reference>
<name>PSBE_GOSBA</name>
<gene>
    <name evidence="1" type="primary">psbE</name>
</gene>
<sequence>MSGSTGERSFADIITSIRYWVIHSITIPSLFIAGWLFVSTGLAYDVFGSPRPNEYFTESRQGIPLITGRFDSLEQLDEFSRSF</sequence>
<protein>
    <recommendedName>
        <fullName evidence="1">Cytochrome b559 subunit alpha</fullName>
    </recommendedName>
    <alternativeName>
        <fullName evidence="1">PSII reaction center subunit V</fullName>
    </alternativeName>
</protein>
<organism>
    <name type="scientific">Gossypium barbadense</name>
    <name type="common">Sea Island cotton</name>
    <name type="synonym">Hibiscus barbadensis</name>
    <dbReference type="NCBI Taxonomy" id="3634"/>
    <lineage>
        <taxon>Eukaryota</taxon>
        <taxon>Viridiplantae</taxon>
        <taxon>Streptophyta</taxon>
        <taxon>Embryophyta</taxon>
        <taxon>Tracheophyta</taxon>
        <taxon>Spermatophyta</taxon>
        <taxon>Magnoliopsida</taxon>
        <taxon>eudicotyledons</taxon>
        <taxon>Gunneridae</taxon>
        <taxon>Pentapetalae</taxon>
        <taxon>rosids</taxon>
        <taxon>malvids</taxon>
        <taxon>Malvales</taxon>
        <taxon>Malvaceae</taxon>
        <taxon>Malvoideae</taxon>
        <taxon>Gossypium</taxon>
    </lineage>
</organism>
<feature type="chain" id="PRO_0000275707" description="Cytochrome b559 subunit alpha">
    <location>
        <begin position="1"/>
        <end position="83"/>
    </location>
</feature>
<feature type="transmembrane region" description="Helical" evidence="1">
    <location>
        <begin position="21"/>
        <end position="35"/>
    </location>
</feature>
<feature type="binding site" description="axial binding residue" evidence="1">
    <location>
        <position position="23"/>
    </location>
    <ligand>
        <name>heme</name>
        <dbReference type="ChEBI" id="CHEBI:30413"/>
        <note>ligand shared with beta subunit</note>
    </ligand>
    <ligandPart>
        <name>Fe</name>
        <dbReference type="ChEBI" id="CHEBI:18248"/>
    </ligandPart>
</feature>
<geneLocation type="chloroplast"/>
<dbReference type="EMBL" id="AP009123">
    <property type="protein sequence ID" value="BAF41264.1"/>
    <property type="molecule type" value="Genomic_DNA"/>
</dbReference>
<dbReference type="RefSeq" id="YP_913204.1">
    <property type="nucleotide sequence ID" value="NC_008641.1"/>
</dbReference>
<dbReference type="SMR" id="A0ZZ52"/>
<dbReference type="GeneID" id="4575220"/>
<dbReference type="GO" id="GO:0009535">
    <property type="term" value="C:chloroplast thylakoid membrane"/>
    <property type="evidence" value="ECO:0007669"/>
    <property type="project" value="UniProtKB-SubCell"/>
</dbReference>
<dbReference type="GO" id="GO:0009539">
    <property type="term" value="C:photosystem II reaction center"/>
    <property type="evidence" value="ECO:0007669"/>
    <property type="project" value="InterPro"/>
</dbReference>
<dbReference type="GO" id="GO:0009055">
    <property type="term" value="F:electron transfer activity"/>
    <property type="evidence" value="ECO:0007669"/>
    <property type="project" value="UniProtKB-UniRule"/>
</dbReference>
<dbReference type="GO" id="GO:0020037">
    <property type="term" value="F:heme binding"/>
    <property type="evidence" value="ECO:0007669"/>
    <property type="project" value="InterPro"/>
</dbReference>
<dbReference type="GO" id="GO:0005506">
    <property type="term" value="F:iron ion binding"/>
    <property type="evidence" value="ECO:0007669"/>
    <property type="project" value="UniProtKB-UniRule"/>
</dbReference>
<dbReference type="GO" id="GO:0009767">
    <property type="term" value="P:photosynthetic electron transport chain"/>
    <property type="evidence" value="ECO:0007669"/>
    <property type="project" value="InterPro"/>
</dbReference>
<dbReference type="Gene3D" id="1.20.5.860">
    <property type="entry name" value="Photosystem II cytochrome b559, alpha subunit"/>
    <property type="match status" value="1"/>
</dbReference>
<dbReference type="HAMAP" id="MF_00642">
    <property type="entry name" value="PSII_PsbE"/>
    <property type="match status" value="1"/>
</dbReference>
<dbReference type="InterPro" id="IPR006217">
    <property type="entry name" value="PSII_cyt_b559_asu"/>
</dbReference>
<dbReference type="InterPro" id="IPR037025">
    <property type="entry name" value="PSII_cyt_b559_asu_sf"/>
</dbReference>
<dbReference type="InterPro" id="IPR006216">
    <property type="entry name" value="PSII_cyt_b559_CS"/>
</dbReference>
<dbReference type="InterPro" id="IPR013081">
    <property type="entry name" value="PSII_cyt_b559_N"/>
</dbReference>
<dbReference type="InterPro" id="IPR013082">
    <property type="entry name" value="PSII_cytb559_asu_lum"/>
</dbReference>
<dbReference type="NCBIfam" id="TIGR01332">
    <property type="entry name" value="cyt_b559_alpha"/>
    <property type="match status" value="1"/>
</dbReference>
<dbReference type="PANTHER" id="PTHR33391">
    <property type="entry name" value="CYTOCHROME B559 SUBUNIT BETA-RELATED"/>
    <property type="match status" value="1"/>
</dbReference>
<dbReference type="PANTHER" id="PTHR33391:SF9">
    <property type="entry name" value="CYTOCHROME B559 SUBUNIT BETA-RELATED"/>
    <property type="match status" value="1"/>
</dbReference>
<dbReference type="Pfam" id="PF00283">
    <property type="entry name" value="Cytochrom_B559"/>
    <property type="match status" value="1"/>
</dbReference>
<dbReference type="Pfam" id="PF00284">
    <property type="entry name" value="Cytochrom_B559a"/>
    <property type="match status" value="1"/>
</dbReference>
<dbReference type="PIRSF" id="PIRSF000036">
    <property type="entry name" value="PsbE"/>
    <property type="match status" value="1"/>
</dbReference>
<dbReference type="SUPFAM" id="SSF161045">
    <property type="entry name" value="Cytochrome b559 subunits"/>
    <property type="match status" value="1"/>
</dbReference>
<dbReference type="PROSITE" id="PS00537">
    <property type="entry name" value="CYTOCHROME_B559"/>
    <property type="match status" value="1"/>
</dbReference>
<comment type="function">
    <text evidence="1">This b-type cytochrome is tightly associated with the reaction center of photosystem II (PSII). PSII is a light-driven water:plastoquinone oxidoreductase that uses light energy to abstract electrons from H(2)O, generating O(2) and a proton gradient subsequently used for ATP formation. It consists of a core antenna complex that captures photons, and an electron transfer chain that converts photonic excitation into a charge separation.</text>
</comment>
<comment type="cofactor">
    <cofactor evidence="1">
        <name>heme b</name>
        <dbReference type="ChEBI" id="CHEBI:60344"/>
    </cofactor>
    <text evidence="1">With its partner (PsbF) binds heme. PSII binds additional chlorophylls, carotenoids and specific lipids.</text>
</comment>
<comment type="subunit">
    <text evidence="1">Heterodimer of an alpha subunit and a beta subunit. PSII is composed of 1 copy each of membrane proteins PsbA, PsbB, PsbC, PsbD, PsbE, PsbF, PsbH, PsbI, PsbJ, PsbK, PsbL, PsbM, PsbT, PsbX, PsbY, PsbZ, Psb30/Ycf12, at least 3 peripheral proteins of the oxygen-evolving complex and a large number of cofactors. It forms dimeric complexes.</text>
</comment>
<comment type="subcellular location">
    <subcellularLocation>
        <location evidence="1">Plastid</location>
        <location evidence="1">Chloroplast thylakoid membrane</location>
        <topology evidence="1">Single-pass membrane protein</topology>
    </subcellularLocation>
</comment>
<comment type="similarity">
    <text evidence="1">Belongs to the PsbE/PsbF family.</text>
</comment>
<accession>A0ZZ52</accession>
<keyword id="KW-0150">Chloroplast</keyword>
<keyword id="KW-0249">Electron transport</keyword>
<keyword id="KW-0349">Heme</keyword>
<keyword id="KW-0408">Iron</keyword>
<keyword id="KW-0472">Membrane</keyword>
<keyword id="KW-0479">Metal-binding</keyword>
<keyword id="KW-0602">Photosynthesis</keyword>
<keyword id="KW-0604">Photosystem II</keyword>
<keyword id="KW-0934">Plastid</keyword>
<keyword id="KW-0793">Thylakoid</keyword>
<keyword id="KW-0812">Transmembrane</keyword>
<keyword id="KW-1133">Transmembrane helix</keyword>
<keyword id="KW-0813">Transport</keyword>
<proteinExistence type="inferred from homology"/>
<evidence type="ECO:0000255" key="1">
    <source>
        <dbReference type="HAMAP-Rule" id="MF_00642"/>
    </source>
</evidence>